<sequence>MSNIDKEKAVAAALAQIEKSYGKGSVMKLGQRPNVDIESVSTGSLGLDIALGIGGIPKGRIIEIFGPESSGKTTLTLHLIAEAQKKGGTCAFIDAEHALDPAYAKKLGVNIDELIISQPDTGEQALEIADTLIRSGGIDMIIIDSVAALVPKSEIEGEMGDAQMASQARLMSQALRKLTASINRTNCITVFINQIRMKIGVMFGSPETTTGGNALKFYASVRIDIRRIGSIKDKEEVIGSQTKVKVVKNKVSPPFKTADFDIMYGSGISKEGEIIDLGVKLDIIEKSGSWFSYNSVRIGQGRENVKQYLKDNPKISNEIEKLVREKSSKVTNINFEQEEEVND</sequence>
<keyword id="KW-0067">ATP-binding</keyword>
<keyword id="KW-0963">Cytoplasm</keyword>
<keyword id="KW-0227">DNA damage</keyword>
<keyword id="KW-0233">DNA recombination</keyword>
<keyword id="KW-0234">DNA repair</keyword>
<keyword id="KW-0238">DNA-binding</keyword>
<keyword id="KW-0547">Nucleotide-binding</keyword>
<keyword id="KW-0742">SOS response</keyword>
<organism>
    <name type="scientific">Rickettsia bellii (strain RML369-C)</name>
    <dbReference type="NCBI Taxonomy" id="336407"/>
    <lineage>
        <taxon>Bacteria</taxon>
        <taxon>Pseudomonadati</taxon>
        <taxon>Pseudomonadota</taxon>
        <taxon>Alphaproteobacteria</taxon>
        <taxon>Rickettsiales</taxon>
        <taxon>Rickettsiaceae</taxon>
        <taxon>Rickettsieae</taxon>
        <taxon>Rickettsia</taxon>
        <taxon>belli group</taxon>
    </lineage>
</organism>
<protein>
    <recommendedName>
        <fullName evidence="1">Protein RecA</fullName>
    </recommendedName>
    <alternativeName>
        <fullName evidence="1">Recombinase A</fullName>
    </alternativeName>
</protein>
<comment type="function">
    <text evidence="1">Can catalyze the hydrolysis of ATP in the presence of single-stranded DNA, the ATP-dependent uptake of single-stranded DNA by duplex DNA, and the ATP-dependent hybridization of homologous single-stranded DNAs. It interacts with LexA causing its activation and leading to its autocatalytic cleavage.</text>
</comment>
<comment type="subcellular location">
    <subcellularLocation>
        <location evidence="1">Cytoplasm</location>
    </subcellularLocation>
</comment>
<comment type="similarity">
    <text evidence="1">Belongs to the RecA family.</text>
</comment>
<gene>
    <name evidence="1" type="primary">recA</name>
    <name type="ordered locus">RBE_0117</name>
</gene>
<proteinExistence type="inferred from homology"/>
<dbReference type="EMBL" id="CP000087">
    <property type="protein sequence ID" value="ABE04198.1"/>
    <property type="molecule type" value="Genomic_DNA"/>
</dbReference>
<dbReference type="RefSeq" id="WP_011476813.1">
    <property type="nucleotide sequence ID" value="NC_007940.1"/>
</dbReference>
<dbReference type="SMR" id="Q1RKB6"/>
<dbReference type="KEGG" id="rbe:RBE_0117"/>
<dbReference type="eggNOG" id="COG0468">
    <property type="taxonomic scope" value="Bacteria"/>
</dbReference>
<dbReference type="HOGENOM" id="CLU_040469_3_2_5"/>
<dbReference type="OrthoDB" id="9776733at2"/>
<dbReference type="Proteomes" id="UP000001951">
    <property type="component" value="Chromosome"/>
</dbReference>
<dbReference type="GO" id="GO:0005829">
    <property type="term" value="C:cytosol"/>
    <property type="evidence" value="ECO:0007669"/>
    <property type="project" value="TreeGrafter"/>
</dbReference>
<dbReference type="GO" id="GO:0005524">
    <property type="term" value="F:ATP binding"/>
    <property type="evidence" value="ECO:0007669"/>
    <property type="project" value="UniProtKB-UniRule"/>
</dbReference>
<dbReference type="GO" id="GO:0016887">
    <property type="term" value="F:ATP hydrolysis activity"/>
    <property type="evidence" value="ECO:0007669"/>
    <property type="project" value="InterPro"/>
</dbReference>
<dbReference type="GO" id="GO:0140664">
    <property type="term" value="F:ATP-dependent DNA damage sensor activity"/>
    <property type="evidence" value="ECO:0007669"/>
    <property type="project" value="InterPro"/>
</dbReference>
<dbReference type="GO" id="GO:0003684">
    <property type="term" value="F:damaged DNA binding"/>
    <property type="evidence" value="ECO:0007669"/>
    <property type="project" value="UniProtKB-UniRule"/>
</dbReference>
<dbReference type="GO" id="GO:0003697">
    <property type="term" value="F:single-stranded DNA binding"/>
    <property type="evidence" value="ECO:0007669"/>
    <property type="project" value="UniProtKB-UniRule"/>
</dbReference>
<dbReference type="GO" id="GO:0006310">
    <property type="term" value="P:DNA recombination"/>
    <property type="evidence" value="ECO:0007669"/>
    <property type="project" value="UniProtKB-UniRule"/>
</dbReference>
<dbReference type="GO" id="GO:0006281">
    <property type="term" value="P:DNA repair"/>
    <property type="evidence" value="ECO:0007669"/>
    <property type="project" value="UniProtKB-UniRule"/>
</dbReference>
<dbReference type="GO" id="GO:0009432">
    <property type="term" value="P:SOS response"/>
    <property type="evidence" value="ECO:0007669"/>
    <property type="project" value="UniProtKB-UniRule"/>
</dbReference>
<dbReference type="CDD" id="cd00983">
    <property type="entry name" value="RecA"/>
    <property type="match status" value="1"/>
</dbReference>
<dbReference type="FunFam" id="3.40.50.300:FF:000087">
    <property type="entry name" value="Recombinase RecA"/>
    <property type="match status" value="1"/>
</dbReference>
<dbReference type="Gene3D" id="3.40.50.300">
    <property type="entry name" value="P-loop containing nucleotide triphosphate hydrolases"/>
    <property type="match status" value="1"/>
</dbReference>
<dbReference type="HAMAP" id="MF_00268">
    <property type="entry name" value="RecA"/>
    <property type="match status" value="1"/>
</dbReference>
<dbReference type="InterPro" id="IPR003593">
    <property type="entry name" value="AAA+_ATPase"/>
</dbReference>
<dbReference type="InterPro" id="IPR013765">
    <property type="entry name" value="DNA_recomb/repair_RecA"/>
</dbReference>
<dbReference type="InterPro" id="IPR020584">
    <property type="entry name" value="DNA_recomb/repair_RecA_CS"/>
</dbReference>
<dbReference type="InterPro" id="IPR027417">
    <property type="entry name" value="P-loop_NTPase"/>
</dbReference>
<dbReference type="InterPro" id="IPR049261">
    <property type="entry name" value="RecA-like_C"/>
</dbReference>
<dbReference type="InterPro" id="IPR049428">
    <property type="entry name" value="RecA-like_N"/>
</dbReference>
<dbReference type="InterPro" id="IPR020588">
    <property type="entry name" value="RecA_ATP-bd"/>
</dbReference>
<dbReference type="InterPro" id="IPR023400">
    <property type="entry name" value="RecA_C_sf"/>
</dbReference>
<dbReference type="InterPro" id="IPR020587">
    <property type="entry name" value="RecA_monomer-monomer_interface"/>
</dbReference>
<dbReference type="NCBIfam" id="TIGR02012">
    <property type="entry name" value="tigrfam_recA"/>
    <property type="match status" value="1"/>
</dbReference>
<dbReference type="PANTHER" id="PTHR45900:SF1">
    <property type="entry name" value="MITOCHONDRIAL DNA REPAIR PROTEIN RECA HOMOLOG-RELATED"/>
    <property type="match status" value="1"/>
</dbReference>
<dbReference type="PANTHER" id="PTHR45900">
    <property type="entry name" value="RECA"/>
    <property type="match status" value="1"/>
</dbReference>
<dbReference type="Pfam" id="PF00154">
    <property type="entry name" value="RecA"/>
    <property type="match status" value="1"/>
</dbReference>
<dbReference type="Pfam" id="PF21096">
    <property type="entry name" value="RecA_C"/>
    <property type="match status" value="1"/>
</dbReference>
<dbReference type="PRINTS" id="PR00142">
    <property type="entry name" value="RECA"/>
</dbReference>
<dbReference type="SMART" id="SM00382">
    <property type="entry name" value="AAA"/>
    <property type="match status" value="1"/>
</dbReference>
<dbReference type="SUPFAM" id="SSF52540">
    <property type="entry name" value="P-loop containing nucleoside triphosphate hydrolases"/>
    <property type="match status" value="1"/>
</dbReference>
<dbReference type="SUPFAM" id="SSF54752">
    <property type="entry name" value="RecA protein, C-terminal domain"/>
    <property type="match status" value="1"/>
</dbReference>
<dbReference type="PROSITE" id="PS00321">
    <property type="entry name" value="RECA_1"/>
    <property type="match status" value="1"/>
</dbReference>
<dbReference type="PROSITE" id="PS50162">
    <property type="entry name" value="RECA_2"/>
    <property type="match status" value="1"/>
</dbReference>
<dbReference type="PROSITE" id="PS50163">
    <property type="entry name" value="RECA_3"/>
    <property type="match status" value="1"/>
</dbReference>
<reference key="1">
    <citation type="journal article" date="2006" name="PLoS Genet.">
        <title>Genome sequence of Rickettsia bellii illuminates the role of amoebae in gene exchanges between intracellular pathogens.</title>
        <authorList>
            <person name="Ogata H."/>
            <person name="La Scola B."/>
            <person name="Audic S."/>
            <person name="Renesto P."/>
            <person name="Blanc G."/>
            <person name="Robert C."/>
            <person name="Fournier P.-E."/>
            <person name="Claverie J.-M."/>
            <person name="Raoult D."/>
        </authorList>
    </citation>
    <scope>NUCLEOTIDE SEQUENCE [LARGE SCALE GENOMIC DNA]</scope>
    <source>
        <strain>RML369-C</strain>
    </source>
</reference>
<feature type="chain" id="PRO_0000278024" description="Protein RecA">
    <location>
        <begin position="1"/>
        <end position="343"/>
    </location>
</feature>
<feature type="binding site" evidence="1">
    <location>
        <begin position="66"/>
        <end position="73"/>
    </location>
    <ligand>
        <name>ATP</name>
        <dbReference type="ChEBI" id="CHEBI:30616"/>
    </ligand>
</feature>
<accession>Q1RKB6</accession>
<name>RECA_RICBR</name>
<evidence type="ECO:0000255" key="1">
    <source>
        <dbReference type="HAMAP-Rule" id="MF_00268"/>
    </source>
</evidence>